<reference key="1">
    <citation type="submission" date="2005-11" db="EMBL/GenBank/DDBJ databases">
        <authorList>
            <consortium name="NIH - Mammalian Gene Collection (MGC) project"/>
        </authorList>
    </citation>
    <scope>NUCLEOTIDE SEQUENCE [LARGE SCALE MRNA]</scope>
    <source>
        <strain>Crossbred X Angus</strain>
        <tissue>Liver</tissue>
    </source>
</reference>
<reference key="2">
    <citation type="journal article" date="2002" name="Structure">
        <title>The structure of the mammalian 20S proteasome at 2.75 A resolution.</title>
        <authorList>
            <person name="Unno M."/>
            <person name="Mizushima T."/>
            <person name="Morimoto Y."/>
            <person name="Tomisugi Y."/>
            <person name="Tanaka K."/>
            <person name="Yasuoka N."/>
            <person name="Tsukihara T."/>
        </authorList>
    </citation>
    <scope>X-RAY CRYSTALLOGRAPHY (2.75 ANGSTROMS) OF COMPLEX WITH THE 20S PROTEASOME</scope>
</reference>
<accession>Q2YDE4</accession>
<proteinExistence type="evidence at protein level"/>
<feature type="chain" id="PRO_0000274034" description="Proteasome subunit alpha type-6">
    <location>
        <begin position="1"/>
        <end position="246"/>
    </location>
</feature>
<feature type="modified residue" description="Phosphoserine" evidence="2">
    <location>
        <position position="17"/>
    </location>
</feature>
<feature type="modified residue" description="Phosphoserine" evidence="2">
    <location>
        <position position="63"/>
    </location>
</feature>
<feature type="modified residue" description="Phosphoserine" evidence="2">
    <location>
        <position position="64"/>
    </location>
</feature>
<feature type="modified residue" description="N6-acetyllysine" evidence="2">
    <location>
        <position position="102"/>
    </location>
</feature>
<feature type="modified residue" description="N6-acetyllysine" evidence="2">
    <location>
        <position position="104"/>
    </location>
</feature>
<feature type="modified residue" description="Phosphotyrosine" evidence="3">
    <location>
        <position position="159"/>
    </location>
</feature>
<feature type="glycosylation site" description="O-linked (GlcNAc) serine" evidence="1">
    <location>
        <position position="5"/>
    </location>
</feature>
<feature type="turn" evidence="7">
    <location>
        <begin position="8"/>
        <end position="12"/>
    </location>
</feature>
<feature type="helix" evidence="7">
    <location>
        <begin position="23"/>
        <end position="34"/>
    </location>
</feature>
<feature type="strand" evidence="7">
    <location>
        <begin position="38"/>
        <end position="43"/>
    </location>
</feature>
<feature type="strand" evidence="7">
    <location>
        <begin position="45"/>
        <end position="53"/>
    </location>
</feature>
<feature type="strand" evidence="6">
    <location>
        <begin position="59"/>
        <end position="61"/>
    </location>
</feature>
<feature type="helix" evidence="7">
    <location>
        <begin position="63"/>
        <end position="65"/>
    </location>
</feature>
<feature type="strand" evidence="7">
    <location>
        <begin position="68"/>
        <end position="75"/>
    </location>
</feature>
<feature type="strand" evidence="7">
    <location>
        <begin position="77"/>
        <end position="82"/>
    </location>
</feature>
<feature type="helix" evidence="7">
    <location>
        <begin position="84"/>
        <end position="105"/>
    </location>
</feature>
<feature type="helix" evidence="7">
    <location>
        <begin position="111"/>
        <end position="127"/>
    </location>
</feature>
<feature type="strand" evidence="7">
    <location>
        <begin position="128"/>
        <end position="131"/>
    </location>
</feature>
<feature type="strand" evidence="7">
    <location>
        <begin position="135"/>
        <end position="144"/>
    </location>
</feature>
<feature type="turn" evidence="7">
    <location>
        <begin position="145"/>
        <end position="147"/>
    </location>
</feature>
<feature type="strand" evidence="7">
    <location>
        <begin position="148"/>
        <end position="154"/>
    </location>
</feature>
<feature type="strand" evidence="7">
    <location>
        <begin position="160"/>
        <end position="169"/>
    </location>
</feature>
<feature type="helix" evidence="7">
    <location>
        <begin position="172"/>
        <end position="184"/>
    </location>
</feature>
<feature type="helix" evidence="7">
    <location>
        <begin position="191"/>
        <end position="206"/>
    </location>
</feature>
<feature type="turn" evidence="7">
    <location>
        <begin position="212"/>
        <end position="214"/>
    </location>
</feature>
<feature type="strand" evidence="7">
    <location>
        <begin position="215"/>
        <end position="223"/>
    </location>
</feature>
<feature type="strand" evidence="6">
    <location>
        <begin position="224"/>
        <end position="229"/>
    </location>
</feature>
<feature type="helix" evidence="7">
    <location>
        <begin position="232"/>
        <end position="244"/>
    </location>
</feature>
<dbReference type="EMBL" id="BC110260">
    <property type="protein sequence ID" value="AAI10261.1"/>
    <property type="molecule type" value="mRNA"/>
</dbReference>
<dbReference type="RefSeq" id="NP_001039427.1">
    <property type="nucleotide sequence ID" value="NM_001045962.1"/>
</dbReference>
<dbReference type="PDB" id="1IRU">
    <property type="method" value="X-ray"/>
    <property type="resolution" value="2.75 A"/>
    <property type="chains" value="A/O=1-246"/>
</dbReference>
<dbReference type="PDB" id="7DR6">
    <property type="method" value="EM"/>
    <property type="resolution" value="4.10 A"/>
    <property type="chains" value="L/e=1-246"/>
</dbReference>
<dbReference type="PDB" id="7DR7">
    <property type="method" value="EM"/>
    <property type="resolution" value="3.30 A"/>
    <property type="chains" value="E/L=1-246"/>
</dbReference>
<dbReference type="PDB" id="7DRW">
    <property type="method" value="EM"/>
    <property type="resolution" value="4.20 A"/>
    <property type="chains" value="A/f=1-246"/>
</dbReference>
<dbReference type="PDB" id="8AZK">
    <property type="method" value="EM"/>
    <property type="resolution" value="3.10 A"/>
    <property type="chains" value="A/O=1-246"/>
</dbReference>
<dbReference type="PDB" id="8FZ5">
    <property type="method" value="EM"/>
    <property type="resolution" value="2.23 A"/>
    <property type="chains" value="A/O=1-246"/>
</dbReference>
<dbReference type="PDB" id="8FZ6">
    <property type="method" value="EM"/>
    <property type="resolution" value="2.54 A"/>
    <property type="chains" value="A/O=1-246"/>
</dbReference>
<dbReference type="PDBsum" id="1IRU"/>
<dbReference type="PDBsum" id="7DR6"/>
<dbReference type="PDBsum" id="7DR7"/>
<dbReference type="PDBsum" id="7DRW"/>
<dbReference type="PDBsum" id="8AZK"/>
<dbReference type="PDBsum" id="8FZ5"/>
<dbReference type="PDBsum" id="8FZ6"/>
<dbReference type="EMDB" id="EMD-15767"/>
<dbReference type="EMDB" id="EMD-29603"/>
<dbReference type="EMDB" id="EMD-29604"/>
<dbReference type="EMDB" id="EMD-30824"/>
<dbReference type="EMDB" id="EMD-30825"/>
<dbReference type="EMDB" id="EMD-30828"/>
<dbReference type="SMR" id="Q2YDE4"/>
<dbReference type="FunCoup" id="Q2YDE4">
    <property type="interactions" value="3007"/>
</dbReference>
<dbReference type="STRING" id="9913.ENSBTAP00000012773"/>
<dbReference type="MEROPS" id="T01.971"/>
<dbReference type="GlyCosmos" id="Q2YDE4">
    <property type="glycosylation" value="1 site, No reported glycans"/>
</dbReference>
<dbReference type="GlyGen" id="Q2YDE4">
    <property type="glycosylation" value="1 site"/>
</dbReference>
<dbReference type="PaxDb" id="9913-ENSBTAP00000012773"/>
<dbReference type="PeptideAtlas" id="Q2YDE4"/>
<dbReference type="GeneID" id="507213"/>
<dbReference type="KEGG" id="bta:507213"/>
<dbReference type="CTD" id="5687"/>
<dbReference type="VEuPathDB" id="HostDB:ENSBTAG00000009683"/>
<dbReference type="eggNOG" id="KOG0182">
    <property type="taxonomic scope" value="Eukaryota"/>
</dbReference>
<dbReference type="HOGENOM" id="CLU_035750_4_1_1"/>
<dbReference type="InParanoid" id="Q2YDE4"/>
<dbReference type="OMA" id="YGYDMPV"/>
<dbReference type="OrthoDB" id="5835702at2759"/>
<dbReference type="Reactome" id="R-BTA-1169091">
    <property type="pathway name" value="Activation of NF-kappaB in B cells"/>
</dbReference>
<dbReference type="Reactome" id="R-BTA-1234176">
    <property type="pathway name" value="Oxygen-dependent proline hydroxylation of Hypoxia-inducible Factor Alpha"/>
</dbReference>
<dbReference type="Reactome" id="R-BTA-1236978">
    <property type="pathway name" value="Cross-presentation of soluble exogenous antigens (endosomes)"/>
</dbReference>
<dbReference type="Reactome" id="R-BTA-174084">
    <property type="pathway name" value="Autodegradation of Cdh1 by Cdh1:APC/C"/>
</dbReference>
<dbReference type="Reactome" id="R-BTA-174154">
    <property type="pathway name" value="APC/C:Cdc20 mediated degradation of Securin"/>
</dbReference>
<dbReference type="Reactome" id="R-BTA-174178">
    <property type="pathway name" value="APC/C:Cdh1 mediated degradation of Cdc20 and other APC/C:Cdh1 targeted proteins in late mitosis/early G1"/>
</dbReference>
<dbReference type="Reactome" id="R-BTA-174184">
    <property type="pathway name" value="Cdc20:Phospho-APC/C mediated degradation of Cyclin A"/>
</dbReference>
<dbReference type="Reactome" id="R-BTA-187577">
    <property type="pathway name" value="SCF(Skp2)-mediated degradation of p27/p21"/>
</dbReference>
<dbReference type="Reactome" id="R-BTA-195253">
    <property type="pathway name" value="Degradation of beta-catenin by the destruction complex"/>
</dbReference>
<dbReference type="Reactome" id="R-BTA-202424">
    <property type="pathway name" value="Downstream TCR signaling"/>
</dbReference>
<dbReference type="Reactome" id="R-BTA-2467813">
    <property type="pathway name" value="Separation of Sister Chromatids"/>
</dbReference>
<dbReference type="Reactome" id="R-BTA-2871837">
    <property type="pathway name" value="FCERI mediated NF-kB activation"/>
</dbReference>
<dbReference type="Reactome" id="R-BTA-349425">
    <property type="pathway name" value="Autodegradation of the E3 ubiquitin ligase COP1"/>
</dbReference>
<dbReference type="Reactome" id="R-BTA-350562">
    <property type="pathway name" value="Regulation of ornithine decarboxylase (ODC)"/>
</dbReference>
<dbReference type="Reactome" id="R-BTA-382556">
    <property type="pathway name" value="ABC-family proteins mediated transport"/>
</dbReference>
<dbReference type="Reactome" id="R-BTA-450408">
    <property type="pathway name" value="AUF1 (hnRNP D0) binds and destabilizes mRNA"/>
</dbReference>
<dbReference type="Reactome" id="R-BTA-4608870">
    <property type="pathway name" value="Asymmetric localization of PCP proteins"/>
</dbReference>
<dbReference type="Reactome" id="R-BTA-4641257">
    <property type="pathway name" value="Degradation of AXIN"/>
</dbReference>
<dbReference type="Reactome" id="R-BTA-4641258">
    <property type="pathway name" value="Degradation of DVL"/>
</dbReference>
<dbReference type="Reactome" id="R-BTA-5358346">
    <property type="pathway name" value="Hedgehog ligand biogenesis"/>
</dbReference>
<dbReference type="Reactome" id="R-BTA-5607761">
    <property type="pathway name" value="Dectin-1 mediated noncanonical NF-kB signaling"/>
</dbReference>
<dbReference type="Reactome" id="R-BTA-5607764">
    <property type="pathway name" value="CLEC7A (Dectin-1) signaling"/>
</dbReference>
<dbReference type="Reactome" id="R-BTA-5610780">
    <property type="pathway name" value="Degradation of GLI1 by the proteasome"/>
</dbReference>
<dbReference type="Reactome" id="R-BTA-5610785">
    <property type="pathway name" value="GLI3 is processed to GLI3R by the proteasome"/>
</dbReference>
<dbReference type="Reactome" id="R-BTA-5632684">
    <property type="pathway name" value="Hedgehog 'on' state"/>
</dbReference>
<dbReference type="Reactome" id="R-BTA-5668541">
    <property type="pathway name" value="TNFR2 non-canonical NF-kB pathway"/>
</dbReference>
<dbReference type="Reactome" id="R-BTA-5676590">
    <property type="pathway name" value="NIK--&gt;noncanonical NF-kB signaling"/>
</dbReference>
<dbReference type="Reactome" id="R-BTA-5687128">
    <property type="pathway name" value="MAPK6/MAPK4 signaling"/>
</dbReference>
<dbReference type="Reactome" id="R-BTA-5689603">
    <property type="pathway name" value="UCH proteinases"/>
</dbReference>
<dbReference type="Reactome" id="R-BTA-5689880">
    <property type="pathway name" value="Ub-specific processing proteases"/>
</dbReference>
<dbReference type="Reactome" id="R-BTA-68867">
    <property type="pathway name" value="Assembly of the pre-replicative complex"/>
</dbReference>
<dbReference type="Reactome" id="R-BTA-68949">
    <property type="pathway name" value="Orc1 removal from chromatin"/>
</dbReference>
<dbReference type="Reactome" id="R-BTA-69017">
    <property type="pathway name" value="CDK-mediated phosphorylation and removal of Cdc6"/>
</dbReference>
<dbReference type="Reactome" id="R-BTA-69481">
    <property type="pathway name" value="G2/M Checkpoints"/>
</dbReference>
<dbReference type="Reactome" id="R-BTA-69601">
    <property type="pathway name" value="Ubiquitin Mediated Degradation of Phosphorylated Cdc25A"/>
</dbReference>
<dbReference type="Reactome" id="R-BTA-75815">
    <property type="pathway name" value="Ubiquitin-dependent degradation of Cyclin D"/>
</dbReference>
<dbReference type="Reactome" id="R-BTA-8852276">
    <property type="pathway name" value="The role of GTSE1 in G2/M progression after G2 checkpoint"/>
</dbReference>
<dbReference type="Reactome" id="R-BTA-8854050">
    <property type="pathway name" value="FBXL7 down-regulates AURKA during mitotic entry and in early mitosis"/>
</dbReference>
<dbReference type="Reactome" id="R-BTA-8939236">
    <property type="pathway name" value="RUNX1 regulates transcription of genes involved in differentiation of HSCs"/>
</dbReference>
<dbReference type="Reactome" id="R-BTA-8939902">
    <property type="pathway name" value="Regulation of RUNX2 expression and activity"/>
</dbReference>
<dbReference type="Reactome" id="R-BTA-8941858">
    <property type="pathway name" value="Regulation of RUNX3 expression and activity"/>
</dbReference>
<dbReference type="Reactome" id="R-BTA-8948751">
    <property type="pathway name" value="Regulation of PTEN stability and activity"/>
</dbReference>
<dbReference type="Reactome" id="R-BTA-8951664">
    <property type="pathway name" value="Neddylation"/>
</dbReference>
<dbReference type="Reactome" id="R-BTA-9020702">
    <property type="pathway name" value="Interleukin-1 signaling"/>
</dbReference>
<dbReference type="Reactome" id="R-BTA-9755511">
    <property type="pathway name" value="KEAP1-NFE2L2 pathway"/>
</dbReference>
<dbReference type="Reactome" id="R-BTA-9762114">
    <property type="pathway name" value="GSK3B and BTRC:CUL1-mediated-degradation of NFE2L2"/>
</dbReference>
<dbReference type="Reactome" id="R-BTA-983168">
    <property type="pathway name" value="Antigen processing: Ubiquitination &amp; Proteasome degradation"/>
</dbReference>
<dbReference type="Reactome" id="R-BTA-9907900">
    <property type="pathway name" value="Proteasome assembly"/>
</dbReference>
<dbReference type="EvolutionaryTrace" id="Q2YDE4"/>
<dbReference type="Proteomes" id="UP000009136">
    <property type="component" value="Chromosome 21"/>
</dbReference>
<dbReference type="Bgee" id="ENSBTAG00000009683">
    <property type="expression patterns" value="Expressed in semen and 103 other cell types or tissues"/>
</dbReference>
<dbReference type="GO" id="GO:0005829">
    <property type="term" value="C:cytosol"/>
    <property type="evidence" value="ECO:0000304"/>
    <property type="project" value="Reactome"/>
</dbReference>
<dbReference type="GO" id="GO:0005634">
    <property type="term" value="C:nucleus"/>
    <property type="evidence" value="ECO:0000318"/>
    <property type="project" value="GO_Central"/>
</dbReference>
<dbReference type="GO" id="GO:0000932">
    <property type="term" value="C:P-body"/>
    <property type="evidence" value="ECO:0000250"/>
    <property type="project" value="UniProtKB"/>
</dbReference>
<dbReference type="GO" id="GO:0005839">
    <property type="term" value="C:proteasome core complex"/>
    <property type="evidence" value="ECO:0000250"/>
    <property type="project" value="UniProtKB"/>
</dbReference>
<dbReference type="GO" id="GO:0019773">
    <property type="term" value="C:proteasome core complex, alpha-subunit complex"/>
    <property type="evidence" value="ECO:0000250"/>
    <property type="project" value="UniProtKB"/>
</dbReference>
<dbReference type="GO" id="GO:0043161">
    <property type="term" value="P:proteasome-mediated ubiquitin-dependent protein catabolic process"/>
    <property type="evidence" value="ECO:0000318"/>
    <property type="project" value="GO_Central"/>
</dbReference>
<dbReference type="CDD" id="cd03754">
    <property type="entry name" value="proteasome_alpha_type_6"/>
    <property type="match status" value="1"/>
</dbReference>
<dbReference type="FunFam" id="3.60.20.10:FF:000020">
    <property type="entry name" value="Proteasome subunit alpha type"/>
    <property type="match status" value="1"/>
</dbReference>
<dbReference type="Gene3D" id="3.60.20.10">
    <property type="entry name" value="Glutamine Phosphoribosylpyrophosphate, subunit 1, domain 1"/>
    <property type="match status" value="1"/>
</dbReference>
<dbReference type="InterPro" id="IPR029055">
    <property type="entry name" value="Ntn_hydrolases_N"/>
</dbReference>
<dbReference type="InterPro" id="IPR050115">
    <property type="entry name" value="Proteasome_alpha"/>
</dbReference>
<dbReference type="InterPro" id="IPR023332">
    <property type="entry name" value="Proteasome_alpha-type"/>
</dbReference>
<dbReference type="InterPro" id="IPR000426">
    <property type="entry name" value="Proteasome_asu_N"/>
</dbReference>
<dbReference type="InterPro" id="IPR001353">
    <property type="entry name" value="Proteasome_sua/b"/>
</dbReference>
<dbReference type="InterPro" id="IPR034642">
    <property type="entry name" value="Proteasome_subunit_alpha6"/>
</dbReference>
<dbReference type="NCBIfam" id="NF003075">
    <property type="entry name" value="PRK03996.1"/>
    <property type="match status" value="1"/>
</dbReference>
<dbReference type="PANTHER" id="PTHR11599">
    <property type="entry name" value="PROTEASOME SUBUNIT ALPHA/BETA"/>
    <property type="match status" value="1"/>
</dbReference>
<dbReference type="Pfam" id="PF00227">
    <property type="entry name" value="Proteasome"/>
    <property type="match status" value="1"/>
</dbReference>
<dbReference type="Pfam" id="PF10584">
    <property type="entry name" value="Proteasome_A_N"/>
    <property type="match status" value="1"/>
</dbReference>
<dbReference type="SMART" id="SM00948">
    <property type="entry name" value="Proteasome_A_N"/>
    <property type="match status" value="1"/>
</dbReference>
<dbReference type="SUPFAM" id="SSF56235">
    <property type="entry name" value="N-terminal nucleophile aminohydrolases (Ntn hydrolases)"/>
    <property type="match status" value="1"/>
</dbReference>
<dbReference type="PROSITE" id="PS00388">
    <property type="entry name" value="PROTEASOME_ALPHA_1"/>
    <property type="match status" value="1"/>
</dbReference>
<dbReference type="PROSITE" id="PS51475">
    <property type="entry name" value="PROTEASOME_ALPHA_2"/>
    <property type="match status" value="1"/>
</dbReference>
<gene>
    <name type="primary">PSMA6</name>
</gene>
<name>PSA6_BOVIN</name>
<protein>
    <recommendedName>
        <fullName>Proteasome subunit alpha type-6</fullName>
    </recommendedName>
</protein>
<organism>
    <name type="scientific">Bos taurus</name>
    <name type="common">Bovine</name>
    <dbReference type="NCBI Taxonomy" id="9913"/>
    <lineage>
        <taxon>Eukaryota</taxon>
        <taxon>Metazoa</taxon>
        <taxon>Chordata</taxon>
        <taxon>Craniata</taxon>
        <taxon>Vertebrata</taxon>
        <taxon>Euteleostomi</taxon>
        <taxon>Mammalia</taxon>
        <taxon>Eutheria</taxon>
        <taxon>Laurasiatheria</taxon>
        <taxon>Artiodactyla</taxon>
        <taxon>Ruminantia</taxon>
        <taxon>Pecora</taxon>
        <taxon>Bovidae</taxon>
        <taxon>Bovinae</taxon>
        <taxon>Bos</taxon>
    </lineage>
</organism>
<sequence length="246" mass="27399">MSRGSSAGFDRHITIFSPEGRLYQVEYAFKAINQGGLTSVAVRGKDCAVIVTQKKVPDKLLDSSTVTHLFKITENIGCVMTGMTADSRSQVQRARYEAANWKYKYGYEIPVDMLCKRIADISQVYTQNAEMRPLGCCMILIGIDEEQGPQVYKCDPAGYYCGFKATAAGVKQTESTSFLEKKVKKKFDWTFEQTVETAITCLSTVLSIDFKPSEIEVGVVTVENPKFRILTEAEIDAHLVALAERD</sequence>
<keyword id="KW-0002">3D-structure</keyword>
<keyword id="KW-0007">Acetylation</keyword>
<keyword id="KW-0963">Cytoplasm</keyword>
<keyword id="KW-0325">Glycoprotein</keyword>
<keyword id="KW-0539">Nucleus</keyword>
<keyword id="KW-0597">Phosphoprotein</keyword>
<keyword id="KW-0647">Proteasome</keyword>
<keyword id="KW-1185">Reference proteome</keyword>
<comment type="function">
    <text evidence="2">Component of the 20S core proteasome complex involved in the proteolytic degradation of most intracellular proteins. This complex plays numerous essential roles within the cell by associating with different regulatory particles. Associated with two 19S regulatory particles, forms the 26S proteasome and thus participates in the ATP-dependent degradation of ubiquitinated proteins. The 26S proteasome plays a key role in the maintenance of protein homeostasis by removing misfolded or damaged proteins that could impair cellular functions, and by removing proteins whose functions are no longer required. Associated with the PA200 or PA28, the 20S proteasome mediates ubiquitin-independent protein degradation. This type of proteolysis is required in several pathways including spermatogenesis (20S-PA200 complex) or generation of a subset of MHC class I-presented antigenic peptides (20S-PA28 complex).</text>
</comment>
<comment type="subunit">
    <text evidence="2 5">The 26S proteasome consists of a 20S proteasome core and two 19S regulatory subunits. The 20S proteasome core is a barrel-shaped complex made of 28 subunits that are arranged in four stacked rings. The two outer rings are each formed by seven alpha subunits, and the two inner rings are formed by seven beta subunits. The proteolytic activity is exerted by three beta-subunits PSMB5, PSMB6 and PSMB7 (PubMed:12015144). Interacts with ALKBH4 (By similarity).</text>
</comment>
<comment type="subcellular location">
    <subcellularLocation>
        <location evidence="2 3">Cytoplasm</location>
    </subcellularLocation>
    <subcellularLocation>
        <location evidence="2">Nucleus</location>
    </subcellularLocation>
    <text evidence="2 3">Translocated from the cytoplasm into the nucleus following interaction with AKIRIN2, which bridges the proteasome with the nuclear import receptor IPO9 (By similarity). Colocalizes with TRIM5 in cytoplasmic bodies (By similarity).</text>
</comment>
<comment type="similarity">
    <text evidence="4">Belongs to the peptidase T1A family.</text>
</comment>
<evidence type="ECO:0000250" key="1"/>
<evidence type="ECO:0000250" key="2">
    <source>
        <dbReference type="UniProtKB" id="P60900"/>
    </source>
</evidence>
<evidence type="ECO:0000250" key="3">
    <source>
        <dbReference type="UniProtKB" id="Q9QUM9"/>
    </source>
</evidence>
<evidence type="ECO:0000255" key="4">
    <source>
        <dbReference type="PROSITE-ProRule" id="PRU00808"/>
    </source>
</evidence>
<evidence type="ECO:0000269" key="5">
    <source>
    </source>
</evidence>
<evidence type="ECO:0007829" key="6">
    <source>
        <dbReference type="PDB" id="1IRU"/>
    </source>
</evidence>
<evidence type="ECO:0007829" key="7">
    <source>
        <dbReference type="PDB" id="8FZ5"/>
    </source>
</evidence>